<proteinExistence type="inferred from homology"/>
<feature type="chain" id="PRO_1000062706" description="Glycine/sarcosine/betaine reductase complex component A">
    <location>
        <begin position="1"/>
        <end position="158"/>
    </location>
</feature>
<feature type="active site" evidence="1">
    <location>
        <position position="44"/>
    </location>
</feature>
<feature type="non-standard amino acid" description="Selenocysteine" evidence="2">
    <location>
        <position position="44"/>
    </location>
</feature>
<gene>
    <name evidence="1" type="primary">grdA</name>
    <name type="ordered locus">CLI_1346</name>
</gene>
<reference key="1">
    <citation type="submission" date="2007-06" db="EMBL/GenBank/DDBJ databases">
        <authorList>
            <person name="Brinkac L.M."/>
            <person name="Daugherty S."/>
            <person name="Dodson R.J."/>
            <person name="Madupu R."/>
            <person name="Brown J.L."/>
            <person name="Bruce D."/>
            <person name="Detter C."/>
            <person name="Munk C."/>
            <person name="Smith L.A."/>
            <person name="Smith T.J."/>
            <person name="White O."/>
            <person name="Brettin T.S."/>
        </authorList>
    </citation>
    <scope>NUCLEOTIDE SEQUENCE [LARGE SCALE GENOMIC DNA]</scope>
    <source>
        <strain>Langeland / NCTC 10281 / Type F</strain>
    </source>
</reference>
<accession>A7GCV1</accession>
<comment type="function">
    <text evidence="1">In the first step of glycine, betaine and sarcosine reductases, the substrate is bound to component PB via a Schiff base intermediate. Then the PB-activated substrate is nucleophilically attacked by the selenol anion of component PA to transform it to a carboxymethylated selenoether and the respective amine. By action of component PC, acetyl phosphate is formed, leaving component PA in its oxidized state. Finally component PA becomes reduced by the thioredoxin system to start a new catalytic cycle of reductive deamination.</text>
</comment>
<comment type="catalytic activity">
    <reaction evidence="1">
        <text>acetyl phosphate + [thioredoxin]-disulfide + NH4(+) + H2O = [thioredoxin]-dithiol + glycine + phosphate + H(+)</text>
        <dbReference type="Rhea" id="RHEA:12232"/>
        <dbReference type="Rhea" id="RHEA-COMP:10698"/>
        <dbReference type="Rhea" id="RHEA-COMP:10700"/>
        <dbReference type="ChEBI" id="CHEBI:15377"/>
        <dbReference type="ChEBI" id="CHEBI:15378"/>
        <dbReference type="ChEBI" id="CHEBI:22191"/>
        <dbReference type="ChEBI" id="CHEBI:28938"/>
        <dbReference type="ChEBI" id="CHEBI:29950"/>
        <dbReference type="ChEBI" id="CHEBI:43474"/>
        <dbReference type="ChEBI" id="CHEBI:50058"/>
        <dbReference type="ChEBI" id="CHEBI:57305"/>
        <dbReference type="EC" id="1.21.4.2"/>
    </reaction>
</comment>
<comment type="catalytic activity">
    <reaction evidence="1">
        <text>acetyl phosphate + methylamine + [thioredoxin]-disulfide + H2O = sarcosine + [thioredoxin]-dithiol + phosphate + H(+)</text>
        <dbReference type="Rhea" id="RHEA:12825"/>
        <dbReference type="Rhea" id="RHEA-COMP:10698"/>
        <dbReference type="Rhea" id="RHEA-COMP:10700"/>
        <dbReference type="ChEBI" id="CHEBI:15377"/>
        <dbReference type="ChEBI" id="CHEBI:15378"/>
        <dbReference type="ChEBI" id="CHEBI:22191"/>
        <dbReference type="ChEBI" id="CHEBI:29950"/>
        <dbReference type="ChEBI" id="CHEBI:43474"/>
        <dbReference type="ChEBI" id="CHEBI:50058"/>
        <dbReference type="ChEBI" id="CHEBI:57433"/>
        <dbReference type="ChEBI" id="CHEBI:59338"/>
        <dbReference type="EC" id="1.21.4.3"/>
    </reaction>
</comment>
<comment type="catalytic activity">
    <reaction evidence="1">
        <text>acetyl phosphate + trimethylamine + [thioredoxin]-disulfide + H2O = glycine betaine + [thioredoxin]-dithiol + phosphate + H(+)</text>
        <dbReference type="Rhea" id="RHEA:11848"/>
        <dbReference type="Rhea" id="RHEA-COMP:10698"/>
        <dbReference type="Rhea" id="RHEA-COMP:10700"/>
        <dbReference type="ChEBI" id="CHEBI:15377"/>
        <dbReference type="ChEBI" id="CHEBI:15378"/>
        <dbReference type="ChEBI" id="CHEBI:17750"/>
        <dbReference type="ChEBI" id="CHEBI:22191"/>
        <dbReference type="ChEBI" id="CHEBI:29950"/>
        <dbReference type="ChEBI" id="CHEBI:43474"/>
        <dbReference type="ChEBI" id="CHEBI:50058"/>
        <dbReference type="ChEBI" id="CHEBI:58389"/>
        <dbReference type="EC" id="1.21.4.4"/>
    </reaction>
</comment>
<comment type="subunit">
    <text evidence="1">Monomer. Component of the glycine, sarcosine and betaine reductase complexes, together with components B and C.</text>
</comment>
<comment type="similarity">
    <text evidence="1">Belongs to the GrdA family.</text>
</comment>
<evidence type="ECO:0000255" key="1">
    <source>
        <dbReference type="HAMAP-Rule" id="MF_00826"/>
    </source>
</evidence>
<evidence type="ECO:0000305" key="2"/>
<organism>
    <name type="scientific">Clostridium botulinum (strain Langeland / NCTC 10281 / Type F)</name>
    <dbReference type="NCBI Taxonomy" id="441772"/>
    <lineage>
        <taxon>Bacteria</taxon>
        <taxon>Bacillati</taxon>
        <taxon>Bacillota</taxon>
        <taxon>Clostridia</taxon>
        <taxon>Eubacteriales</taxon>
        <taxon>Clostridiaceae</taxon>
        <taxon>Clostridium</taxon>
    </lineage>
</organism>
<sequence>MSLFEGKKVIIIGDRDGIPGPAIEKCIEGTGAEVVFSSTECFVUTAAGAMDLENQKRVKTLTEKHGAENILVILGAAEGEAAGLAAETVTNGDPTFAGPLSNVQLGLRVYHAVEPEFKEEVNEEVYEEEIGMMEMVLEVDEIIEEMTDIRTEFCKFLD</sequence>
<dbReference type="EC" id="1.21.4.2" evidence="1"/>
<dbReference type="EC" id="1.21.4.3" evidence="1"/>
<dbReference type="EC" id="1.21.4.4" evidence="1"/>
<dbReference type="EMBL" id="CP000728">
    <property type="protein sequence ID" value="ABS41814.1"/>
    <property type="molecule type" value="Genomic_DNA"/>
</dbReference>
<dbReference type="KEGG" id="cbf:CLI_1346"/>
<dbReference type="HOGENOM" id="CLU_142275_0_0_9"/>
<dbReference type="Proteomes" id="UP000002410">
    <property type="component" value="Chromosome"/>
</dbReference>
<dbReference type="GO" id="GO:0030700">
    <property type="term" value="C:glycine reductase complex"/>
    <property type="evidence" value="ECO:0007669"/>
    <property type="project" value="InterPro"/>
</dbReference>
<dbReference type="GO" id="GO:0033795">
    <property type="term" value="F:betaine reductase activity"/>
    <property type="evidence" value="ECO:0007669"/>
    <property type="project" value="UniProtKB-EC"/>
</dbReference>
<dbReference type="GO" id="GO:0030699">
    <property type="term" value="F:glycine reductase activity"/>
    <property type="evidence" value="ECO:0007669"/>
    <property type="project" value="UniProtKB-UniRule"/>
</dbReference>
<dbReference type="GO" id="GO:0033794">
    <property type="term" value="F:sarcosine reductase activity"/>
    <property type="evidence" value="ECO:0007669"/>
    <property type="project" value="UniProtKB-EC"/>
</dbReference>
<dbReference type="HAMAP" id="MF_00826">
    <property type="entry name" value="GRDA"/>
    <property type="match status" value="1"/>
</dbReference>
<dbReference type="InterPro" id="IPR006812">
    <property type="entry name" value="GRDA"/>
</dbReference>
<dbReference type="NCBIfam" id="NF040748">
    <property type="entry name" value="reduct_selen_A"/>
    <property type="match status" value="1"/>
</dbReference>
<dbReference type="Pfam" id="PF04723">
    <property type="entry name" value="GRDA"/>
    <property type="match status" value="1"/>
</dbReference>
<dbReference type="PIRSF" id="PIRSF000181">
    <property type="entry name" value="Grc_selenoprot_A"/>
    <property type="match status" value="1"/>
</dbReference>
<protein>
    <recommendedName>
        <fullName evidence="1">Glycine/sarcosine/betaine reductase complex component A</fullName>
        <ecNumber evidence="1">1.21.4.2</ecNumber>
        <ecNumber evidence="1">1.21.4.3</ecNumber>
        <ecNumber evidence="1">1.21.4.4</ecNumber>
    </recommendedName>
    <alternativeName>
        <fullName evidence="1">Selenoprotein PA</fullName>
    </alternativeName>
    <alternativeName>
        <fullName evidence="1">Thioredoxin reductase complex selenoprotein A</fullName>
    </alternativeName>
</protein>
<keyword id="KW-0560">Oxidoreductase</keyword>
<keyword id="KW-0712">Selenocysteine</keyword>
<name>GRDA_CLOBL</name>